<sequence>MSLTEEIKKRRTFAIISHPDAGKTTITEQLLYFGGEIREAGTVKGKKSGTFAKSDWMDIEKQRGISVTSSVMQFDYAGKRVNILDTPGHEDFSEDTYRTLMAVDAAVMVVDSAKGIEAQTKKLFEVVKHRNIPVFTFINKLDRDGREPLELLEELEEVLGIASYPMNWPIGMGRAFEGLYDLHNKRLELYKGDERFASIEDGDQLFANNPFYEQVKEDIELLQEAGNDFSEQAILDGDLTPVFFGSALTNFGVQTFLDTFLEFAPEPHGHKTTEGNVIDPLAKDFSGFVFKIQANMDPKHRDRIAFVRIVSGEFERGMGVNLTRTGKGAKLSNVTQFMAESRENVTNAVAGDIIGVYDTGTYQVGDTLTVGKNKFEFEPLPTFTPEIFMKVSPKNVMKQKSFHKGIEQLVQEGAIQLYKNYQTGEYMLGAVGQLQFEVFKHRMEGEYNAEVVMTPMGKKTVRWISEDDLDQRMSSSRNILAKDRFDQPVFLFENDFALRWFADKYPDVTLEEKM</sequence>
<dbReference type="EMBL" id="AE009949">
    <property type="protein sequence ID" value="AAL98012.1"/>
    <property type="molecule type" value="Genomic_DNA"/>
</dbReference>
<dbReference type="RefSeq" id="WP_011017955.1">
    <property type="nucleotide sequence ID" value="NC_003485.1"/>
</dbReference>
<dbReference type="SMR" id="Q8P0C7"/>
<dbReference type="KEGG" id="spm:spyM18_1425"/>
<dbReference type="HOGENOM" id="CLU_002794_2_1_9"/>
<dbReference type="GO" id="GO:0005829">
    <property type="term" value="C:cytosol"/>
    <property type="evidence" value="ECO:0007669"/>
    <property type="project" value="TreeGrafter"/>
</dbReference>
<dbReference type="GO" id="GO:0005525">
    <property type="term" value="F:GTP binding"/>
    <property type="evidence" value="ECO:0007669"/>
    <property type="project" value="UniProtKB-UniRule"/>
</dbReference>
<dbReference type="GO" id="GO:0003924">
    <property type="term" value="F:GTPase activity"/>
    <property type="evidence" value="ECO:0007669"/>
    <property type="project" value="InterPro"/>
</dbReference>
<dbReference type="GO" id="GO:0016150">
    <property type="term" value="F:translation release factor activity, codon nonspecific"/>
    <property type="evidence" value="ECO:0007669"/>
    <property type="project" value="TreeGrafter"/>
</dbReference>
<dbReference type="GO" id="GO:0016149">
    <property type="term" value="F:translation release factor activity, codon specific"/>
    <property type="evidence" value="ECO:0007669"/>
    <property type="project" value="UniProtKB-UniRule"/>
</dbReference>
<dbReference type="GO" id="GO:0006449">
    <property type="term" value="P:regulation of translational termination"/>
    <property type="evidence" value="ECO:0007669"/>
    <property type="project" value="UniProtKB-UniRule"/>
</dbReference>
<dbReference type="CDD" id="cd04169">
    <property type="entry name" value="RF3"/>
    <property type="match status" value="1"/>
</dbReference>
<dbReference type="CDD" id="cd16259">
    <property type="entry name" value="RF3_III"/>
    <property type="match status" value="1"/>
</dbReference>
<dbReference type="FunFam" id="2.40.30.10:FF:000040">
    <property type="entry name" value="Peptide chain release factor 3"/>
    <property type="match status" value="1"/>
</dbReference>
<dbReference type="FunFam" id="3.30.70.3280:FF:000001">
    <property type="entry name" value="Peptide chain release factor 3"/>
    <property type="match status" value="1"/>
</dbReference>
<dbReference type="FunFam" id="3.40.50.300:FF:000542">
    <property type="entry name" value="Peptide chain release factor 3"/>
    <property type="match status" value="1"/>
</dbReference>
<dbReference type="Gene3D" id="3.40.50.300">
    <property type="entry name" value="P-loop containing nucleotide triphosphate hydrolases"/>
    <property type="match status" value="1"/>
</dbReference>
<dbReference type="Gene3D" id="3.30.70.3280">
    <property type="entry name" value="Peptide chain release factor 3, domain III"/>
    <property type="match status" value="1"/>
</dbReference>
<dbReference type="Gene3D" id="2.40.30.10">
    <property type="entry name" value="Translation factors"/>
    <property type="match status" value="1"/>
</dbReference>
<dbReference type="HAMAP" id="MF_00072">
    <property type="entry name" value="Rel_fac_3"/>
    <property type="match status" value="1"/>
</dbReference>
<dbReference type="InterPro" id="IPR053905">
    <property type="entry name" value="EF-G-like_DII"/>
</dbReference>
<dbReference type="InterPro" id="IPR035647">
    <property type="entry name" value="EFG_III/V"/>
</dbReference>
<dbReference type="InterPro" id="IPR031157">
    <property type="entry name" value="G_TR_CS"/>
</dbReference>
<dbReference type="InterPro" id="IPR027417">
    <property type="entry name" value="P-loop_NTPase"/>
</dbReference>
<dbReference type="InterPro" id="IPR004548">
    <property type="entry name" value="PrfC"/>
</dbReference>
<dbReference type="InterPro" id="IPR032090">
    <property type="entry name" value="RF3_C"/>
</dbReference>
<dbReference type="InterPro" id="IPR038467">
    <property type="entry name" value="RF3_dom_3_sf"/>
</dbReference>
<dbReference type="InterPro" id="IPR041732">
    <property type="entry name" value="RF3_GTP-bd"/>
</dbReference>
<dbReference type="InterPro" id="IPR005225">
    <property type="entry name" value="Small_GTP-bd"/>
</dbReference>
<dbReference type="InterPro" id="IPR000795">
    <property type="entry name" value="T_Tr_GTP-bd_dom"/>
</dbReference>
<dbReference type="InterPro" id="IPR009000">
    <property type="entry name" value="Transl_B-barrel_sf"/>
</dbReference>
<dbReference type="NCBIfam" id="TIGR00503">
    <property type="entry name" value="prfC"/>
    <property type="match status" value="1"/>
</dbReference>
<dbReference type="NCBIfam" id="NF001964">
    <property type="entry name" value="PRK00741.1"/>
    <property type="match status" value="1"/>
</dbReference>
<dbReference type="NCBIfam" id="TIGR00231">
    <property type="entry name" value="small_GTP"/>
    <property type="match status" value="1"/>
</dbReference>
<dbReference type="PANTHER" id="PTHR43556">
    <property type="entry name" value="PEPTIDE CHAIN RELEASE FACTOR RF3"/>
    <property type="match status" value="1"/>
</dbReference>
<dbReference type="PANTHER" id="PTHR43556:SF2">
    <property type="entry name" value="PEPTIDE CHAIN RELEASE FACTOR RF3"/>
    <property type="match status" value="1"/>
</dbReference>
<dbReference type="Pfam" id="PF22042">
    <property type="entry name" value="EF-G_D2"/>
    <property type="match status" value="1"/>
</dbReference>
<dbReference type="Pfam" id="PF00009">
    <property type="entry name" value="GTP_EFTU"/>
    <property type="match status" value="1"/>
</dbReference>
<dbReference type="Pfam" id="PF16658">
    <property type="entry name" value="RF3_C"/>
    <property type="match status" value="1"/>
</dbReference>
<dbReference type="PRINTS" id="PR00315">
    <property type="entry name" value="ELONGATNFCT"/>
</dbReference>
<dbReference type="PRINTS" id="PR01037">
    <property type="entry name" value="TCRTETOQM"/>
</dbReference>
<dbReference type="SUPFAM" id="SSF54980">
    <property type="entry name" value="EF-G C-terminal domain-like"/>
    <property type="match status" value="1"/>
</dbReference>
<dbReference type="SUPFAM" id="SSF52540">
    <property type="entry name" value="P-loop containing nucleoside triphosphate hydrolases"/>
    <property type="match status" value="1"/>
</dbReference>
<dbReference type="SUPFAM" id="SSF50447">
    <property type="entry name" value="Translation proteins"/>
    <property type="match status" value="1"/>
</dbReference>
<dbReference type="PROSITE" id="PS00301">
    <property type="entry name" value="G_TR_1"/>
    <property type="match status" value="1"/>
</dbReference>
<dbReference type="PROSITE" id="PS51722">
    <property type="entry name" value="G_TR_2"/>
    <property type="match status" value="1"/>
</dbReference>
<comment type="function">
    <text evidence="1">Increases the formation of ribosomal termination complexes and stimulates activities of RF-1 and RF-2. It binds guanine nucleotides and has strong preference for UGA stop codons. It may interact directly with the ribosome. The stimulation of RF-1 and RF-2 is significantly reduced by GTP and GDP, but not by GMP.</text>
</comment>
<comment type="subcellular location">
    <subcellularLocation>
        <location evidence="1">Cytoplasm</location>
    </subcellularLocation>
</comment>
<comment type="similarity">
    <text evidence="1">Belongs to the TRAFAC class translation factor GTPase superfamily. Classic translation factor GTPase family. PrfC subfamily.</text>
</comment>
<keyword id="KW-0963">Cytoplasm</keyword>
<keyword id="KW-0342">GTP-binding</keyword>
<keyword id="KW-0547">Nucleotide-binding</keyword>
<keyword id="KW-0648">Protein biosynthesis</keyword>
<name>RF3_STRP8</name>
<evidence type="ECO:0000255" key="1">
    <source>
        <dbReference type="HAMAP-Rule" id="MF_00072"/>
    </source>
</evidence>
<reference key="1">
    <citation type="journal article" date="2002" name="Proc. Natl. Acad. Sci. U.S.A.">
        <title>Genome sequence and comparative microarray analysis of serotype M18 group A Streptococcus strains associated with acute rheumatic fever outbreaks.</title>
        <authorList>
            <person name="Smoot J.C."/>
            <person name="Barbian K.D."/>
            <person name="Van Gompel J.J."/>
            <person name="Smoot L.M."/>
            <person name="Chaussee M.S."/>
            <person name="Sylva G.L."/>
            <person name="Sturdevant D.E."/>
            <person name="Ricklefs S.M."/>
            <person name="Porcella S.F."/>
            <person name="Parkins L.D."/>
            <person name="Beres S.B."/>
            <person name="Campbell D.S."/>
            <person name="Smith T.M."/>
            <person name="Zhang Q."/>
            <person name="Kapur V."/>
            <person name="Daly J.A."/>
            <person name="Veasy L.G."/>
            <person name="Musser J.M."/>
        </authorList>
    </citation>
    <scope>NUCLEOTIDE SEQUENCE [LARGE SCALE GENOMIC DNA]</scope>
    <source>
        <strain>MGAS8232</strain>
    </source>
</reference>
<protein>
    <recommendedName>
        <fullName evidence="1">Peptide chain release factor 3</fullName>
        <shortName evidence="1">RF-3</shortName>
    </recommendedName>
</protein>
<proteinExistence type="inferred from homology"/>
<accession>Q8P0C7</accession>
<feature type="chain" id="PRO_0000210977" description="Peptide chain release factor 3">
    <location>
        <begin position="1"/>
        <end position="514"/>
    </location>
</feature>
<feature type="domain" description="tr-type G">
    <location>
        <begin position="8"/>
        <end position="268"/>
    </location>
</feature>
<feature type="binding site" evidence="1">
    <location>
        <begin position="17"/>
        <end position="24"/>
    </location>
    <ligand>
        <name>GTP</name>
        <dbReference type="ChEBI" id="CHEBI:37565"/>
    </ligand>
</feature>
<feature type="binding site" evidence="1">
    <location>
        <begin position="85"/>
        <end position="89"/>
    </location>
    <ligand>
        <name>GTP</name>
        <dbReference type="ChEBI" id="CHEBI:37565"/>
    </ligand>
</feature>
<feature type="binding site" evidence="1">
    <location>
        <begin position="139"/>
        <end position="142"/>
    </location>
    <ligand>
        <name>GTP</name>
        <dbReference type="ChEBI" id="CHEBI:37565"/>
    </ligand>
</feature>
<organism>
    <name type="scientific">Streptococcus pyogenes serotype M18 (strain MGAS8232)</name>
    <dbReference type="NCBI Taxonomy" id="186103"/>
    <lineage>
        <taxon>Bacteria</taxon>
        <taxon>Bacillati</taxon>
        <taxon>Bacillota</taxon>
        <taxon>Bacilli</taxon>
        <taxon>Lactobacillales</taxon>
        <taxon>Streptococcaceae</taxon>
        <taxon>Streptococcus</taxon>
    </lineage>
</organism>
<gene>
    <name evidence="1" type="primary">prfC</name>
    <name type="ordered locus">spyM18_1425</name>
</gene>